<proteinExistence type="inferred from homology"/>
<gene>
    <name evidence="1" type="primary">recX</name>
    <name type="ordered locus">YE0833</name>
</gene>
<dbReference type="EMBL" id="AM286415">
    <property type="protein sequence ID" value="CAL10933.1"/>
    <property type="molecule type" value="Genomic_DNA"/>
</dbReference>
<dbReference type="RefSeq" id="WP_005167422.1">
    <property type="nucleotide sequence ID" value="NC_008800.1"/>
</dbReference>
<dbReference type="RefSeq" id="YP_001005171.1">
    <property type="nucleotide sequence ID" value="NC_008800.1"/>
</dbReference>
<dbReference type="SMR" id="A1JK08"/>
<dbReference type="KEGG" id="yen:YE0833"/>
<dbReference type="PATRIC" id="fig|393305.7.peg.927"/>
<dbReference type="eggNOG" id="COG2137">
    <property type="taxonomic scope" value="Bacteria"/>
</dbReference>
<dbReference type="HOGENOM" id="CLU_066607_3_2_6"/>
<dbReference type="OrthoDB" id="7066780at2"/>
<dbReference type="Proteomes" id="UP000000642">
    <property type="component" value="Chromosome"/>
</dbReference>
<dbReference type="GO" id="GO:0005737">
    <property type="term" value="C:cytoplasm"/>
    <property type="evidence" value="ECO:0007669"/>
    <property type="project" value="UniProtKB-SubCell"/>
</dbReference>
<dbReference type="GO" id="GO:0006282">
    <property type="term" value="P:regulation of DNA repair"/>
    <property type="evidence" value="ECO:0007669"/>
    <property type="project" value="UniProtKB-UniRule"/>
</dbReference>
<dbReference type="Gene3D" id="1.10.10.10">
    <property type="entry name" value="Winged helix-like DNA-binding domain superfamily/Winged helix DNA-binding domain"/>
    <property type="match status" value="3"/>
</dbReference>
<dbReference type="HAMAP" id="MF_01114">
    <property type="entry name" value="RecX"/>
    <property type="match status" value="1"/>
</dbReference>
<dbReference type="InterPro" id="IPR053926">
    <property type="entry name" value="RecX_HTH_1st"/>
</dbReference>
<dbReference type="InterPro" id="IPR053924">
    <property type="entry name" value="RecX_HTH_2nd"/>
</dbReference>
<dbReference type="InterPro" id="IPR053925">
    <property type="entry name" value="RecX_HTH_3rd"/>
</dbReference>
<dbReference type="InterPro" id="IPR003783">
    <property type="entry name" value="Regulatory_RecX"/>
</dbReference>
<dbReference type="InterPro" id="IPR036388">
    <property type="entry name" value="WH-like_DNA-bd_sf"/>
</dbReference>
<dbReference type="NCBIfam" id="NF001053">
    <property type="entry name" value="PRK00117.1-3"/>
    <property type="match status" value="1"/>
</dbReference>
<dbReference type="PANTHER" id="PTHR33602">
    <property type="entry name" value="REGULATORY PROTEIN RECX FAMILY PROTEIN"/>
    <property type="match status" value="1"/>
</dbReference>
<dbReference type="PANTHER" id="PTHR33602:SF1">
    <property type="entry name" value="REGULATORY PROTEIN RECX FAMILY PROTEIN"/>
    <property type="match status" value="1"/>
</dbReference>
<dbReference type="Pfam" id="PF21982">
    <property type="entry name" value="RecX_HTH1"/>
    <property type="match status" value="1"/>
</dbReference>
<dbReference type="Pfam" id="PF02631">
    <property type="entry name" value="RecX_HTH2"/>
    <property type="match status" value="1"/>
</dbReference>
<dbReference type="Pfam" id="PF21981">
    <property type="entry name" value="RecX_HTH3"/>
    <property type="match status" value="1"/>
</dbReference>
<reference key="1">
    <citation type="journal article" date="2006" name="PLoS Genet.">
        <title>The complete genome sequence and comparative genome analysis of the high pathogenicity Yersinia enterocolitica strain 8081.</title>
        <authorList>
            <person name="Thomson N.R."/>
            <person name="Howard S."/>
            <person name="Wren B.W."/>
            <person name="Holden M.T.G."/>
            <person name="Crossman L."/>
            <person name="Challis G.L."/>
            <person name="Churcher C."/>
            <person name="Mungall K."/>
            <person name="Brooks K."/>
            <person name="Chillingworth T."/>
            <person name="Feltwell T."/>
            <person name="Abdellah Z."/>
            <person name="Hauser H."/>
            <person name="Jagels K."/>
            <person name="Maddison M."/>
            <person name="Moule S."/>
            <person name="Sanders M."/>
            <person name="Whitehead S."/>
            <person name="Quail M.A."/>
            <person name="Dougan G."/>
            <person name="Parkhill J."/>
            <person name="Prentice M.B."/>
        </authorList>
    </citation>
    <scope>NUCLEOTIDE SEQUENCE [LARGE SCALE GENOMIC DNA]</scope>
    <source>
        <strain>NCTC 13174 / 8081</strain>
    </source>
</reference>
<comment type="function">
    <text evidence="1">Modulates RecA activity.</text>
</comment>
<comment type="subcellular location">
    <subcellularLocation>
        <location evidence="1">Cytoplasm</location>
    </subcellularLocation>
</comment>
<comment type="similarity">
    <text evidence="1">Belongs to the RecX family.</text>
</comment>
<feature type="chain" id="PRO_1000065232" description="Regulatory protein RecX">
    <location>
        <begin position="1"/>
        <end position="167"/>
    </location>
</feature>
<feature type="region of interest" description="Disordered" evidence="2">
    <location>
        <begin position="19"/>
        <end position="49"/>
    </location>
</feature>
<organism>
    <name type="scientific">Yersinia enterocolitica serotype O:8 / biotype 1B (strain NCTC 13174 / 8081)</name>
    <dbReference type="NCBI Taxonomy" id="393305"/>
    <lineage>
        <taxon>Bacteria</taxon>
        <taxon>Pseudomonadati</taxon>
        <taxon>Pseudomonadota</taxon>
        <taxon>Gammaproteobacteria</taxon>
        <taxon>Enterobacterales</taxon>
        <taxon>Yersiniaceae</taxon>
        <taxon>Yersinia</taxon>
    </lineage>
</organism>
<evidence type="ECO:0000255" key="1">
    <source>
        <dbReference type="HAMAP-Rule" id="MF_01114"/>
    </source>
</evidence>
<evidence type="ECO:0000256" key="2">
    <source>
        <dbReference type="SAM" id="MobiDB-lite"/>
    </source>
</evidence>
<name>RECX_YERE8</name>
<keyword id="KW-0963">Cytoplasm</keyword>
<sequence>MNDLLSRAMRLLSQRDHSESELRRKLASQPFSAKGHWGKQTGRSDNEPVADIDPKVIEQVIAYCYQHNWLDDARFATSYINSRSRKGYGAQRIRSELMQKGVDKELIQAAFEISEINWCLLAKEVAQRKFSEILPIEWKEKVKVQRYLLYRGFFQEEIQSIYNDFVE</sequence>
<accession>A1JK08</accession>
<protein>
    <recommendedName>
        <fullName evidence="1">Regulatory protein RecX</fullName>
    </recommendedName>
</protein>